<protein>
    <recommendedName>
        <fullName evidence="1">UPF0397 protein SP70585_0545</fullName>
    </recommendedName>
</protein>
<proteinExistence type="inferred from homology"/>
<dbReference type="EMBL" id="CP000918">
    <property type="protein sequence ID" value="ACO17125.1"/>
    <property type="molecule type" value="Genomic_DNA"/>
</dbReference>
<dbReference type="RefSeq" id="WP_000403170.1">
    <property type="nucleotide sequence ID" value="NC_012468.1"/>
</dbReference>
<dbReference type="SMR" id="C1C5K9"/>
<dbReference type="KEGG" id="snm:SP70585_0545"/>
<dbReference type="HOGENOM" id="CLU_120023_0_0_9"/>
<dbReference type="Proteomes" id="UP000002211">
    <property type="component" value="Chromosome"/>
</dbReference>
<dbReference type="GO" id="GO:0005886">
    <property type="term" value="C:plasma membrane"/>
    <property type="evidence" value="ECO:0007669"/>
    <property type="project" value="UniProtKB-SubCell"/>
</dbReference>
<dbReference type="Gene3D" id="1.10.1760.20">
    <property type="match status" value="1"/>
</dbReference>
<dbReference type="HAMAP" id="MF_01572">
    <property type="entry name" value="UPF0397"/>
    <property type="match status" value="1"/>
</dbReference>
<dbReference type="InterPro" id="IPR009825">
    <property type="entry name" value="ECF_substrate-spec-like"/>
</dbReference>
<dbReference type="InterPro" id="IPR022914">
    <property type="entry name" value="UPF0397"/>
</dbReference>
<dbReference type="NCBIfam" id="NF010182">
    <property type="entry name" value="PRK13661.1"/>
    <property type="match status" value="1"/>
</dbReference>
<dbReference type="PANTHER" id="PTHR37815">
    <property type="entry name" value="UPF0397 PROTEIN BC_2624-RELATED"/>
    <property type="match status" value="1"/>
</dbReference>
<dbReference type="PANTHER" id="PTHR37815:SF3">
    <property type="entry name" value="UPF0397 PROTEIN SPR0429"/>
    <property type="match status" value="1"/>
</dbReference>
<dbReference type="Pfam" id="PF07155">
    <property type="entry name" value="ECF-ribofla_trS"/>
    <property type="match status" value="1"/>
</dbReference>
<gene>
    <name type="ordered locus">SP70585_0545</name>
</gene>
<evidence type="ECO:0000255" key="1">
    <source>
        <dbReference type="HAMAP-Rule" id="MF_01572"/>
    </source>
</evidence>
<organism>
    <name type="scientific">Streptococcus pneumoniae (strain 70585)</name>
    <dbReference type="NCBI Taxonomy" id="488221"/>
    <lineage>
        <taxon>Bacteria</taxon>
        <taxon>Bacillati</taxon>
        <taxon>Bacillota</taxon>
        <taxon>Bacilli</taxon>
        <taxon>Lactobacillales</taxon>
        <taxon>Streptococcaceae</taxon>
        <taxon>Streptococcus</taxon>
    </lineage>
</organism>
<feature type="chain" id="PRO_1000185569" description="UPF0397 protein SP70585_0545">
    <location>
        <begin position="1"/>
        <end position="182"/>
    </location>
</feature>
<feature type="transmembrane region" description="Helical" evidence="1">
    <location>
        <begin position="10"/>
        <end position="30"/>
    </location>
</feature>
<feature type="transmembrane region" description="Helical" evidence="1">
    <location>
        <begin position="46"/>
        <end position="66"/>
    </location>
</feature>
<feature type="transmembrane region" description="Helical" evidence="1">
    <location>
        <begin position="73"/>
        <end position="93"/>
    </location>
</feature>
<feature type="transmembrane region" description="Helical" evidence="1">
    <location>
        <begin position="109"/>
        <end position="129"/>
    </location>
</feature>
<feature type="transmembrane region" description="Helical" evidence="1">
    <location>
        <begin position="148"/>
        <end position="168"/>
    </location>
</feature>
<keyword id="KW-1003">Cell membrane</keyword>
<keyword id="KW-0472">Membrane</keyword>
<keyword id="KW-0812">Transmembrane</keyword>
<keyword id="KW-1133">Transmembrane helix</keyword>
<name>Y545_STRP7</name>
<accession>C1C5K9</accession>
<sequence>MEIKFTIKQVVAVGIGAALFVVIGMINIPTPVPNTSIQLQYAVQALLSIIFGPIIGLLVGLIGHAIKDSLVGYGLWWTWIIASGLFGLVVGLFRKYVRVINSVFDWKDILIFNLIQLLANALVWGVLAPLGDVVIYQEAAEKVFAQGIVAGIANGVSVAIAGTLLLLAYAGTQTRAGSLKKD</sequence>
<comment type="subcellular location">
    <subcellularLocation>
        <location evidence="1">Cell membrane</location>
        <topology evidence="1">Multi-pass membrane protein</topology>
    </subcellularLocation>
</comment>
<comment type="similarity">
    <text evidence="1">Belongs to the UPF0397 family.</text>
</comment>
<reference key="1">
    <citation type="journal article" date="2010" name="Genome Biol.">
        <title>Structure and dynamics of the pan-genome of Streptococcus pneumoniae and closely related species.</title>
        <authorList>
            <person name="Donati C."/>
            <person name="Hiller N.L."/>
            <person name="Tettelin H."/>
            <person name="Muzzi A."/>
            <person name="Croucher N.J."/>
            <person name="Angiuoli S.V."/>
            <person name="Oggioni M."/>
            <person name="Dunning Hotopp J.C."/>
            <person name="Hu F.Z."/>
            <person name="Riley D.R."/>
            <person name="Covacci A."/>
            <person name="Mitchell T.J."/>
            <person name="Bentley S.D."/>
            <person name="Kilian M."/>
            <person name="Ehrlich G.D."/>
            <person name="Rappuoli R."/>
            <person name="Moxon E.R."/>
            <person name="Masignani V."/>
        </authorList>
    </citation>
    <scope>NUCLEOTIDE SEQUENCE [LARGE SCALE GENOMIC DNA]</scope>
    <source>
        <strain>70585</strain>
    </source>
</reference>